<sequence>MRASKYHLNTLKEAPAEAEIASHQLMTRAGMIRKLAGGIYTYMPLGLKVIRKIEGIVREEMNAAGAIELLMPVVQPAELWMESGRWEQYGAELLRIKDRHQRDFVLQPTSEEVITDIARNEIQSYRQLPLNFYHIQTKFRDERRPRFGLMRGREFTMKDAYSFDRDEAGAQRSYDIMYAAYQRIFQRLGLEFRAVAADTGSIGGSRSHEFQVIADTGEDLIVYNPESDYAANIELAEAPALLATRAAPGQDLEAVPTPGAAKCEDVAKLLDLPLARTIKSIVLAVDQPEGPAQVWLLLLRGDHELNEIKAGKLPGLAGFRFATETEILDHFGCKPGYLGPIKTARPVHVVADRTVANMADFVCGANREDYHYQGANWARDLPEPELVADLRNVVEGDPSPDGKGALSIQRGIEVGHVFFLGTKYSEALKATFLDDNGKPAVLQMGCYGIGVTRIVGAAIEQNHDARGIIWPRAIAPYEVVICPVGWGKSETVRDTALALYEALRARGVDVMLDDRDSRPGVMFAEWELIGVPLRVTVGERGLNEGVVELQARREAEAAKVPVDQALAQTLAKLDLL</sequence>
<proteinExistence type="inferred from homology"/>
<dbReference type="EC" id="6.1.1.15" evidence="1"/>
<dbReference type="EMBL" id="BX640449">
    <property type="protein sequence ID" value="CAE34596.1"/>
    <property type="molecule type" value="Genomic_DNA"/>
</dbReference>
<dbReference type="RefSeq" id="WP_010927073.1">
    <property type="nucleotide sequence ID" value="NC_002927.3"/>
</dbReference>
<dbReference type="SMR" id="Q7WFN9"/>
<dbReference type="KEGG" id="bbr:BB4232"/>
<dbReference type="eggNOG" id="COG0442">
    <property type="taxonomic scope" value="Bacteria"/>
</dbReference>
<dbReference type="HOGENOM" id="CLU_016739_0_0_4"/>
<dbReference type="Proteomes" id="UP000001027">
    <property type="component" value="Chromosome"/>
</dbReference>
<dbReference type="GO" id="GO:0005829">
    <property type="term" value="C:cytosol"/>
    <property type="evidence" value="ECO:0007669"/>
    <property type="project" value="TreeGrafter"/>
</dbReference>
<dbReference type="GO" id="GO:0002161">
    <property type="term" value="F:aminoacyl-tRNA deacylase activity"/>
    <property type="evidence" value="ECO:0007669"/>
    <property type="project" value="InterPro"/>
</dbReference>
<dbReference type="GO" id="GO:0005524">
    <property type="term" value="F:ATP binding"/>
    <property type="evidence" value="ECO:0007669"/>
    <property type="project" value="UniProtKB-UniRule"/>
</dbReference>
<dbReference type="GO" id="GO:0004827">
    <property type="term" value="F:proline-tRNA ligase activity"/>
    <property type="evidence" value="ECO:0007669"/>
    <property type="project" value="UniProtKB-UniRule"/>
</dbReference>
<dbReference type="GO" id="GO:0006433">
    <property type="term" value="P:prolyl-tRNA aminoacylation"/>
    <property type="evidence" value="ECO:0007669"/>
    <property type="project" value="UniProtKB-UniRule"/>
</dbReference>
<dbReference type="CDD" id="cd04334">
    <property type="entry name" value="ProRS-INS"/>
    <property type="match status" value="1"/>
</dbReference>
<dbReference type="CDD" id="cd00861">
    <property type="entry name" value="ProRS_anticodon_short"/>
    <property type="match status" value="1"/>
</dbReference>
<dbReference type="CDD" id="cd00779">
    <property type="entry name" value="ProRS_core_prok"/>
    <property type="match status" value="1"/>
</dbReference>
<dbReference type="FunFam" id="3.30.930.10:FF:000012">
    <property type="entry name" value="Proline--tRNA ligase"/>
    <property type="match status" value="1"/>
</dbReference>
<dbReference type="FunFam" id="3.30.930.10:FF:000097">
    <property type="entry name" value="Proline--tRNA ligase"/>
    <property type="match status" value="1"/>
</dbReference>
<dbReference type="Gene3D" id="3.40.50.800">
    <property type="entry name" value="Anticodon-binding domain"/>
    <property type="match status" value="1"/>
</dbReference>
<dbReference type="Gene3D" id="3.30.930.10">
    <property type="entry name" value="Bira Bifunctional Protein, Domain 2"/>
    <property type="match status" value="2"/>
</dbReference>
<dbReference type="Gene3D" id="3.90.960.10">
    <property type="entry name" value="YbaK/aminoacyl-tRNA synthetase-associated domain"/>
    <property type="match status" value="1"/>
</dbReference>
<dbReference type="HAMAP" id="MF_01569">
    <property type="entry name" value="Pro_tRNA_synth_type1"/>
    <property type="match status" value="1"/>
</dbReference>
<dbReference type="InterPro" id="IPR002314">
    <property type="entry name" value="aa-tRNA-synt_IIb"/>
</dbReference>
<dbReference type="InterPro" id="IPR006195">
    <property type="entry name" value="aa-tRNA-synth_II"/>
</dbReference>
<dbReference type="InterPro" id="IPR045864">
    <property type="entry name" value="aa-tRNA-synth_II/BPL/LPL"/>
</dbReference>
<dbReference type="InterPro" id="IPR004154">
    <property type="entry name" value="Anticodon-bd"/>
</dbReference>
<dbReference type="InterPro" id="IPR036621">
    <property type="entry name" value="Anticodon-bd_dom_sf"/>
</dbReference>
<dbReference type="InterPro" id="IPR002316">
    <property type="entry name" value="Pro-tRNA-ligase_IIa"/>
</dbReference>
<dbReference type="InterPro" id="IPR004500">
    <property type="entry name" value="Pro-tRNA-synth_IIa_bac-type"/>
</dbReference>
<dbReference type="InterPro" id="IPR023717">
    <property type="entry name" value="Pro-tRNA-Synthase_IIa_type1"/>
</dbReference>
<dbReference type="InterPro" id="IPR050062">
    <property type="entry name" value="Pro-tRNA_synthetase"/>
</dbReference>
<dbReference type="InterPro" id="IPR044140">
    <property type="entry name" value="ProRS_anticodon_short"/>
</dbReference>
<dbReference type="InterPro" id="IPR033730">
    <property type="entry name" value="ProRS_core_prok"/>
</dbReference>
<dbReference type="InterPro" id="IPR036754">
    <property type="entry name" value="YbaK/aa-tRNA-synt-asso_dom_sf"/>
</dbReference>
<dbReference type="InterPro" id="IPR007214">
    <property type="entry name" value="YbaK/aa-tRNA-synth-assoc-dom"/>
</dbReference>
<dbReference type="NCBIfam" id="NF006625">
    <property type="entry name" value="PRK09194.1"/>
    <property type="match status" value="1"/>
</dbReference>
<dbReference type="NCBIfam" id="TIGR00409">
    <property type="entry name" value="proS_fam_II"/>
    <property type="match status" value="1"/>
</dbReference>
<dbReference type="PANTHER" id="PTHR42753">
    <property type="entry name" value="MITOCHONDRIAL RIBOSOME PROTEIN L39/PROLYL-TRNA LIGASE FAMILY MEMBER"/>
    <property type="match status" value="1"/>
</dbReference>
<dbReference type="PANTHER" id="PTHR42753:SF2">
    <property type="entry name" value="PROLINE--TRNA LIGASE"/>
    <property type="match status" value="1"/>
</dbReference>
<dbReference type="Pfam" id="PF03129">
    <property type="entry name" value="HGTP_anticodon"/>
    <property type="match status" value="1"/>
</dbReference>
<dbReference type="Pfam" id="PF00587">
    <property type="entry name" value="tRNA-synt_2b"/>
    <property type="match status" value="1"/>
</dbReference>
<dbReference type="Pfam" id="PF04073">
    <property type="entry name" value="tRNA_edit"/>
    <property type="match status" value="1"/>
</dbReference>
<dbReference type="PIRSF" id="PIRSF001535">
    <property type="entry name" value="ProRS_1"/>
    <property type="match status" value="1"/>
</dbReference>
<dbReference type="PRINTS" id="PR01046">
    <property type="entry name" value="TRNASYNTHPRO"/>
</dbReference>
<dbReference type="SUPFAM" id="SSF52954">
    <property type="entry name" value="Class II aaRS ABD-related"/>
    <property type="match status" value="1"/>
</dbReference>
<dbReference type="SUPFAM" id="SSF55681">
    <property type="entry name" value="Class II aaRS and biotin synthetases"/>
    <property type="match status" value="1"/>
</dbReference>
<dbReference type="SUPFAM" id="SSF55826">
    <property type="entry name" value="YbaK/ProRS associated domain"/>
    <property type="match status" value="1"/>
</dbReference>
<dbReference type="PROSITE" id="PS50862">
    <property type="entry name" value="AA_TRNA_LIGASE_II"/>
    <property type="match status" value="1"/>
</dbReference>
<accession>Q7WFN9</accession>
<name>SYP_BORBR</name>
<reference key="1">
    <citation type="journal article" date="2003" name="Nat. Genet.">
        <title>Comparative analysis of the genome sequences of Bordetella pertussis, Bordetella parapertussis and Bordetella bronchiseptica.</title>
        <authorList>
            <person name="Parkhill J."/>
            <person name="Sebaihia M."/>
            <person name="Preston A."/>
            <person name="Murphy L.D."/>
            <person name="Thomson N.R."/>
            <person name="Harris D.E."/>
            <person name="Holden M.T.G."/>
            <person name="Churcher C.M."/>
            <person name="Bentley S.D."/>
            <person name="Mungall K.L."/>
            <person name="Cerdeno-Tarraga A.-M."/>
            <person name="Temple L."/>
            <person name="James K.D."/>
            <person name="Harris B."/>
            <person name="Quail M.A."/>
            <person name="Achtman M."/>
            <person name="Atkin R."/>
            <person name="Baker S."/>
            <person name="Basham D."/>
            <person name="Bason N."/>
            <person name="Cherevach I."/>
            <person name="Chillingworth T."/>
            <person name="Collins M."/>
            <person name="Cronin A."/>
            <person name="Davis P."/>
            <person name="Doggett J."/>
            <person name="Feltwell T."/>
            <person name="Goble A."/>
            <person name="Hamlin N."/>
            <person name="Hauser H."/>
            <person name="Holroyd S."/>
            <person name="Jagels K."/>
            <person name="Leather S."/>
            <person name="Moule S."/>
            <person name="Norberczak H."/>
            <person name="O'Neil S."/>
            <person name="Ormond D."/>
            <person name="Price C."/>
            <person name="Rabbinowitsch E."/>
            <person name="Rutter S."/>
            <person name="Sanders M."/>
            <person name="Saunders D."/>
            <person name="Seeger K."/>
            <person name="Sharp S."/>
            <person name="Simmonds M."/>
            <person name="Skelton J."/>
            <person name="Squares R."/>
            <person name="Squares S."/>
            <person name="Stevens K."/>
            <person name="Unwin L."/>
            <person name="Whitehead S."/>
            <person name="Barrell B.G."/>
            <person name="Maskell D.J."/>
        </authorList>
    </citation>
    <scope>NUCLEOTIDE SEQUENCE [LARGE SCALE GENOMIC DNA]</scope>
    <source>
        <strain>ATCC BAA-588 / NCTC 13252 / RB50</strain>
    </source>
</reference>
<evidence type="ECO:0000255" key="1">
    <source>
        <dbReference type="HAMAP-Rule" id="MF_01569"/>
    </source>
</evidence>
<protein>
    <recommendedName>
        <fullName evidence="1">Proline--tRNA ligase</fullName>
        <ecNumber evidence="1">6.1.1.15</ecNumber>
    </recommendedName>
    <alternativeName>
        <fullName evidence="1">Prolyl-tRNA synthetase</fullName>
        <shortName evidence="1">ProRS</shortName>
    </alternativeName>
</protein>
<comment type="function">
    <text evidence="1">Catalyzes the attachment of proline to tRNA(Pro) in a two-step reaction: proline is first activated by ATP to form Pro-AMP and then transferred to the acceptor end of tRNA(Pro). As ProRS can inadvertently accommodate and process non-cognate amino acids such as alanine and cysteine, to avoid such errors it has two additional distinct editing activities against alanine. One activity is designated as 'pretransfer' editing and involves the tRNA(Pro)-independent hydrolysis of activated Ala-AMP. The other activity is designated 'posttransfer' editing and involves deacylation of mischarged Ala-tRNA(Pro). The misacylated Cys-tRNA(Pro) is not edited by ProRS.</text>
</comment>
<comment type="catalytic activity">
    <reaction evidence="1">
        <text>tRNA(Pro) + L-proline + ATP = L-prolyl-tRNA(Pro) + AMP + diphosphate</text>
        <dbReference type="Rhea" id="RHEA:14305"/>
        <dbReference type="Rhea" id="RHEA-COMP:9700"/>
        <dbReference type="Rhea" id="RHEA-COMP:9702"/>
        <dbReference type="ChEBI" id="CHEBI:30616"/>
        <dbReference type="ChEBI" id="CHEBI:33019"/>
        <dbReference type="ChEBI" id="CHEBI:60039"/>
        <dbReference type="ChEBI" id="CHEBI:78442"/>
        <dbReference type="ChEBI" id="CHEBI:78532"/>
        <dbReference type="ChEBI" id="CHEBI:456215"/>
        <dbReference type="EC" id="6.1.1.15"/>
    </reaction>
</comment>
<comment type="subunit">
    <text evidence="1">Homodimer.</text>
</comment>
<comment type="subcellular location">
    <subcellularLocation>
        <location evidence="1">Cytoplasm</location>
    </subcellularLocation>
</comment>
<comment type="domain">
    <text evidence="1">Consists of three domains: the N-terminal catalytic domain, the editing domain and the C-terminal anticodon-binding domain.</text>
</comment>
<comment type="similarity">
    <text evidence="1">Belongs to the class-II aminoacyl-tRNA synthetase family. ProS type 1 subfamily.</text>
</comment>
<organism>
    <name type="scientific">Bordetella bronchiseptica (strain ATCC BAA-588 / NCTC 13252 / RB50)</name>
    <name type="common">Alcaligenes bronchisepticus</name>
    <dbReference type="NCBI Taxonomy" id="257310"/>
    <lineage>
        <taxon>Bacteria</taxon>
        <taxon>Pseudomonadati</taxon>
        <taxon>Pseudomonadota</taxon>
        <taxon>Betaproteobacteria</taxon>
        <taxon>Burkholderiales</taxon>
        <taxon>Alcaligenaceae</taxon>
        <taxon>Bordetella</taxon>
    </lineage>
</organism>
<gene>
    <name evidence="1" type="primary">proS</name>
    <name type="ordered locus">BB4232</name>
</gene>
<keyword id="KW-0030">Aminoacyl-tRNA synthetase</keyword>
<keyword id="KW-0067">ATP-binding</keyword>
<keyword id="KW-0963">Cytoplasm</keyword>
<keyword id="KW-0436">Ligase</keyword>
<keyword id="KW-0547">Nucleotide-binding</keyword>
<keyword id="KW-0648">Protein biosynthesis</keyword>
<feature type="chain" id="PRO_0000248655" description="Proline--tRNA ligase">
    <location>
        <begin position="1"/>
        <end position="576"/>
    </location>
</feature>